<keyword id="KW-0963">Cytoplasm</keyword>
<keyword id="KW-0251">Elongation factor</keyword>
<keyword id="KW-0342">GTP-binding</keyword>
<keyword id="KW-0547">Nucleotide-binding</keyword>
<keyword id="KW-0648">Protein biosynthesis</keyword>
<keyword id="KW-1185">Reference proteome</keyword>
<name>EF2_THESM</name>
<gene>
    <name evidence="1" type="primary">fusA</name>
    <name type="ordered locus">TSIB_1514</name>
</gene>
<organism>
    <name type="scientific">Thermococcus sibiricus (strain DSM 12597 / MM 739)</name>
    <dbReference type="NCBI Taxonomy" id="604354"/>
    <lineage>
        <taxon>Archaea</taxon>
        <taxon>Methanobacteriati</taxon>
        <taxon>Methanobacteriota</taxon>
        <taxon>Thermococci</taxon>
        <taxon>Thermococcales</taxon>
        <taxon>Thermococcaceae</taxon>
        <taxon>Thermococcus</taxon>
    </lineage>
</organism>
<accession>C6A4M0</accession>
<reference key="1">
    <citation type="journal article" date="2009" name="Appl. Environ. Microbiol.">
        <title>Metabolic versatility and indigenous origin of the archaeon Thermococcus sibiricus, isolated from a siberian oil reservoir, as revealed by genome analysis.</title>
        <authorList>
            <person name="Mardanov A.V."/>
            <person name="Ravin N.V."/>
            <person name="Svetlitchnyi V.A."/>
            <person name="Beletsky A.V."/>
            <person name="Miroshnichenko M.L."/>
            <person name="Bonch-Osmolovskaya E.A."/>
            <person name="Skryabin K.G."/>
        </authorList>
    </citation>
    <scope>NUCLEOTIDE SEQUENCE [LARGE SCALE GENOMIC DNA]</scope>
    <source>
        <strain>DSM 12597 / MM 739</strain>
    </source>
</reference>
<protein>
    <recommendedName>
        <fullName evidence="1">Elongation factor 2</fullName>
        <shortName evidence="1">EF-2</shortName>
    </recommendedName>
</protein>
<sequence>MGKREEMIKEIKELMLQPERIRNMGIAAHIDHGKTTLSDNLLAGAGMISEELAGKQLVLDFDEQEQARGITINAANVSMIHEYGDQKYLVNLIDTPGHVDFGGDVTRAMRAIDGAIIVVDAVEGVMPQTETVLRQALREYVKPVLFINKVDRLIKELKLNPQQMQERFVRVITDVNRLIRKYAPAEFKNKWLVNVNDGSVAFGSAYYNWALSVPYMKKTGVSFKDIIDLTNAGDLKTLRKKAPLHVVVLDMVVRHLPNPVEAQKYRIPHLWRGEIESEIGQSMASCNPKGKMVMVVTKIIIDKHAGEVATGRVWSGTVKTGQEVHIITAKRKARIQQVGIYMGPERINMEAVPAGNIVAVTGLRDAMAGETVAEEPIEPFEALHYTSEPVVTVAIEAKNVKDLPRLIEALRQLAKEDPTLHVKIDEETGQHLLSGMGELHLEVKLVHLKEQWGVDVDVSEPIVVYRESITKQSPIVEGKSPNKHNRFYIVVEPMPDEIYQAIREGEIPEGRPKDTKVVAKKLAELGMDYEIARGIVDIYNGNMFLDNTKGLQYLNEVMDLLVDGFHQAMDEGPLAREPVMKVIVRLVDAKIHEDNVHRGPAQIYPAIRTAIHCAMMKSNPVLYEPYQKVVINVPYEYMGSVSREMNQRRGQLIDMRQEGEVMIIISEAPVAEMFGFAGAIRGATSGRALWSTEHAGFKRVPTELAINIIRQIRQRKGLNPNPPTEKDICPQQ</sequence>
<proteinExistence type="inferred from homology"/>
<dbReference type="EMBL" id="CP001463">
    <property type="protein sequence ID" value="ACS90565.1"/>
    <property type="molecule type" value="Genomic_DNA"/>
</dbReference>
<dbReference type="RefSeq" id="WP_015849782.1">
    <property type="nucleotide sequence ID" value="NC_012883.1"/>
</dbReference>
<dbReference type="SMR" id="C6A4M0"/>
<dbReference type="STRING" id="604354.TSIB_1514"/>
<dbReference type="GeneID" id="8096522"/>
<dbReference type="KEGG" id="tsi:TSIB_1514"/>
<dbReference type="eggNOG" id="arCOG01559">
    <property type="taxonomic scope" value="Archaea"/>
</dbReference>
<dbReference type="HOGENOM" id="CLU_002794_11_1_2"/>
<dbReference type="OrthoDB" id="6290at2157"/>
<dbReference type="Proteomes" id="UP000009079">
    <property type="component" value="Chromosome"/>
</dbReference>
<dbReference type="GO" id="GO:0005829">
    <property type="term" value="C:cytosol"/>
    <property type="evidence" value="ECO:0007669"/>
    <property type="project" value="TreeGrafter"/>
</dbReference>
<dbReference type="GO" id="GO:1990904">
    <property type="term" value="C:ribonucleoprotein complex"/>
    <property type="evidence" value="ECO:0007669"/>
    <property type="project" value="TreeGrafter"/>
</dbReference>
<dbReference type="GO" id="GO:0005525">
    <property type="term" value="F:GTP binding"/>
    <property type="evidence" value="ECO:0007669"/>
    <property type="project" value="UniProtKB-UniRule"/>
</dbReference>
<dbReference type="GO" id="GO:0003924">
    <property type="term" value="F:GTPase activity"/>
    <property type="evidence" value="ECO:0007669"/>
    <property type="project" value="InterPro"/>
</dbReference>
<dbReference type="GO" id="GO:0003746">
    <property type="term" value="F:translation elongation factor activity"/>
    <property type="evidence" value="ECO:0007669"/>
    <property type="project" value="UniProtKB-UniRule"/>
</dbReference>
<dbReference type="CDD" id="cd01681">
    <property type="entry name" value="aeEF2_snRNP_like_IV"/>
    <property type="match status" value="1"/>
</dbReference>
<dbReference type="CDD" id="cd01885">
    <property type="entry name" value="EF2"/>
    <property type="match status" value="1"/>
</dbReference>
<dbReference type="CDD" id="cd16268">
    <property type="entry name" value="EF2_II"/>
    <property type="match status" value="1"/>
</dbReference>
<dbReference type="CDD" id="cd16261">
    <property type="entry name" value="EF2_snRNP_III"/>
    <property type="match status" value="1"/>
</dbReference>
<dbReference type="CDD" id="cd01514">
    <property type="entry name" value="Elongation_Factor_C"/>
    <property type="match status" value="1"/>
</dbReference>
<dbReference type="FunFam" id="3.30.230.10:FF:000009">
    <property type="entry name" value="116 kDa U5 small nuclear ribonucleoprotein component"/>
    <property type="match status" value="1"/>
</dbReference>
<dbReference type="FunFam" id="2.40.30.10:FF:000110">
    <property type="entry name" value="Elongation factor 2"/>
    <property type="match status" value="1"/>
</dbReference>
<dbReference type="FunFam" id="3.30.70.240:FF:000010">
    <property type="entry name" value="Elongation factor 2"/>
    <property type="match status" value="1"/>
</dbReference>
<dbReference type="FunFam" id="3.40.50.300:FF:000684">
    <property type="entry name" value="Elongation factor 2"/>
    <property type="match status" value="1"/>
</dbReference>
<dbReference type="FunFam" id="3.30.70.870:FF:000002">
    <property type="entry name" value="Translation elongation factor 2"/>
    <property type="match status" value="1"/>
</dbReference>
<dbReference type="Gene3D" id="3.30.230.10">
    <property type="match status" value="1"/>
</dbReference>
<dbReference type="Gene3D" id="3.30.70.240">
    <property type="match status" value="1"/>
</dbReference>
<dbReference type="Gene3D" id="3.30.70.870">
    <property type="entry name" value="Elongation Factor G (Translational Gtpase), domain 3"/>
    <property type="match status" value="1"/>
</dbReference>
<dbReference type="Gene3D" id="3.40.50.300">
    <property type="entry name" value="P-loop containing nucleotide triphosphate hydrolases"/>
    <property type="match status" value="1"/>
</dbReference>
<dbReference type="Gene3D" id="2.40.30.10">
    <property type="entry name" value="Translation factors"/>
    <property type="match status" value="1"/>
</dbReference>
<dbReference type="HAMAP" id="MF_00054_A">
    <property type="entry name" value="EF_G_EF_2_A"/>
    <property type="match status" value="1"/>
</dbReference>
<dbReference type="InterPro" id="IPR041095">
    <property type="entry name" value="EFG_II"/>
</dbReference>
<dbReference type="InterPro" id="IPR035647">
    <property type="entry name" value="EFG_III/V"/>
</dbReference>
<dbReference type="InterPro" id="IPR000640">
    <property type="entry name" value="EFG_V-like"/>
</dbReference>
<dbReference type="InterPro" id="IPR004161">
    <property type="entry name" value="EFTu-like_2"/>
</dbReference>
<dbReference type="InterPro" id="IPR031157">
    <property type="entry name" value="G_TR_CS"/>
</dbReference>
<dbReference type="InterPro" id="IPR027417">
    <property type="entry name" value="P-loop_NTPase"/>
</dbReference>
<dbReference type="InterPro" id="IPR020568">
    <property type="entry name" value="Ribosomal_Su5_D2-typ_SF"/>
</dbReference>
<dbReference type="InterPro" id="IPR014721">
    <property type="entry name" value="Ribsml_uS5_D2-typ_fold_subgr"/>
</dbReference>
<dbReference type="InterPro" id="IPR005225">
    <property type="entry name" value="Small_GTP-bd"/>
</dbReference>
<dbReference type="InterPro" id="IPR000795">
    <property type="entry name" value="T_Tr_GTP-bd_dom"/>
</dbReference>
<dbReference type="InterPro" id="IPR009000">
    <property type="entry name" value="Transl_B-barrel_sf"/>
</dbReference>
<dbReference type="InterPro" id="IPR004543">
    <property type="entry name" value="Transl_elong_EFG/EF2_arc"/>
</dbReference>
<dbReference type="InterPro" id="IPR005517">
    <property type="entry name" value="Transl_elong_EFG/EF2_IV"/>
</dbReference>
<dbReference type="NCBIfam" id="TIGR00490">
    <property type="entry name" value="aEF-2"/>
    <property type="match status" value="1"/>
</dbReference>
<dbReference type="NCBIfam" id="TIGR00231">
    <property type="entry name" value="small_GTP"/>
    <property type="match status" value="1"/>
</dbReference>
<dbReference type="PANTHER" id="PTHR42908:SF3">
    <property type="entry name" value="ELONGATION FACTOR-LIKE GTPASE 1"/>
    <property type="match status" value="1"/>
</dbReference>
<dbReference type="PANTHER" id="PTHR42908">
    <property type="entry name" value="TRANSLATION ELONGATION FACTOR-RELATED"/>
    <property type="match status" value="1"/>
</dbReference>
<dbReference type="Pfam" id="PF00679">
    <property type="entry name" value="EFG_C"/>
    <property type="match status" value="1"/>
</dbReference>
<dbReference type="Pfam" id="PF14492">
    <property type="entry name" value="EFG_III"/>
    <property type="match status" value="1"/>
</dbReference>
<dbReference type="Pfam" id="PF03764">
    <property type="entry name" value="EFG_IV"/>
    <property type="match status" value="1"/>
</dbReference>
<dbReference type="Pfam" id="PF00009">
    <property type="entry name" value="GTP_EFTU"/>
    <property type="match status" value="1"/>
</dbReference>
<dbReference type="Pfam" id="PF03144">
    <property type="entry name" value="GTP_EFTU_D2"/>
    <property type="match status" value="1"/>
</dbReference>
<dbReference type="PRINTS" id="PR00315">
    <property type="entry name" value="ELONGATNFCT"/>
</dbReference>
<dbReference type="SMART" id="SM00838">
    <property type="entry name" value="EFG_C"/>
    <property type="match status" value="1"/>
</dbReference>
<dbReference type="SMART" id="SM00889">
    <property type="entry name" value="EFG_IV"/>
    <property type="match status" value="1"/>
</dbReference>
<dbReference type="SUPFAM" id="SSF54980">
    <property type="entry name" value="EF-G C-terminal domain-like"/>
    <property type="match status" value="2"/>
</dbReference>
<dbReference type="SUPFAM" id="SSF52540">
    <property type="entry name" value="P-loop containing nucleoside triphosphate hydrolases"/>
    <property type="match status" value="1"/>
</dbReference>
<dbReference type="SUPFAM" id="SSF54211">
    <property type="entry name" value="Ribosomal protein S5 domain 2-like"/>
    <property type="match status" value="1"/>
</dbReference>
<dbReference type="SUPFAM" id="SSF50447">
    <property type="entry name" value="Translation proteins"/>
    <property type="match status" value="1"/>
</dbReference>
<dbReference type="PROSITE" id="PS00301">
    <property type="entry name" value="G_TR_1"/>
    <property type="match status" value="1"/>
</dbReference>
<dbReference type="PROSITE" id="PS51722">
    <property type="entry name" value="G_TR_2"/>
    <property type="match status" value="1"/>
</dbReference>
<evidence type="ECO:0000255" key="1">
    <source>
        <dbReference type="HAMAP-Rule" id="MF_00054"/>
    </source>
</evidence>
<feature type="chain" id="PRO_1000202321" description="Elongation factor 2">
    <location>
        <begin position="1"/>
        <end position="732"/>
    </location>
</feature>
<feature type="domain" description="tr-type G">
    <location>
        <begin position="19"/>
        <end position="230"/>
    </location>
</feature>
<feature type="binding site" evidence="1">
    <location>
        <begin position="28"/>
        <end position="35"/>
    </location>
    <ligand>
        <name>GTP</name>
        <dbReference type="ChEBI" id="CHEBI:37565"/>
    </ligand>
</feature>
<feature type="binding site" evidence="1">
    <location>
        <begin position="94"/>
        <end position="98"/>
    </location>
    <ligand>
        <name>GTP</name>
        <dbReference type="ChEBI" id="CHEBI:37565"/>
    </ligand>
</feature>
<feature type="binding site" evidence="1">
    <location>
        <begin position="148"/>
        <end position="151"/>
    </location>
    <ligand>
        <name>GTP</name>
        <dbReference type="ChEBI" id="CHEBI:37565"/>
    </ligand>
</feature>
<feature type="modified residue" description="Diphthamide" evidence="1">
    <location>
        <position position="597"/>
    </location>
</feature>
<comment type="function">
    <text evidence="1">Catalyzes the GTP-dependent ribosomal translocation step during translation elongation. During this step, the ribosome changes from the pre-translocational (PRE) to the post-translocational (POST) state as the newly formed A-site-bound peptidyl-tRNA and P-site-bound deacylated tRNA move to the P and E sites, respectively. Catalyzes the coordinated movement of the two tRNA molecules, the mRNA and conformational changes in the ribosome.</text>
</comment>
<comment type="subcellular location">
    <subcellularLocation>
        <location evidence="1">Cytoplasm</location>
    </subcellularLocation>
</comment>
<comment type="similarity">
    <text evidence="1">Belongs to the TRAFAC class translation factor GTPase superfamily. Classic translation factor GTPase family. EF-G/EF-2 subfamily.</text>
</comment>